<gene>
    <name type="primary">GAPDH</name>
    <name type="synonym">GAPD</name>
</gene>
<protein>
    <recommendedName>
        <fullName>Glyceraldehyde-3-phosphate dehydrogenase</fullName>
        <shortName>GAPDH</shortName>
        <ecNumber evidence="1">1.2.1.12</ecNumber>
    </recommendedName>
    <alternativeName>
        <fullName evidence="5">Peptidyl-cysteine S-nitrosylase GAPDH</fullName>
        <ecNumber evidence="2">2.6.99.-</ecNumber>
    </alternativeName>
</protein>
<evidence type="ECO:0000250" key="1">
    <source>
        <dbReference type="UniProtKB" id="P04406"/>
    </source>
</evidence>
<evidence type="ECO:0000250" key="2">
    <source>
        <dbReference type="UniProtKB" id="P04797"/>
    </source>
</evidence>
<evidence type="ECO:0000250" key="3">
    <source>
        <dbReference type="UniProtKB" id="P22513"/>
    </source>
</evidence>
<evidence type="ECO:0000255" key="4">
    <source>
        <dbReference type="PROSITE-ProRule" id="PRU10009"/>
    </source>
</evidence>
<evidence type="ECO:0000305" key="5"/>
<proteinExistence type="evidence at transcript level"/>
<reference key="1">
    <citation type="submission" date="1997-12" db="EMBL/GenBank/DDBJ databases">
        <authorList>
            <person name="Mehus J.G."/>
            <person name="Lambeth D.O."/>
        </authorList>
    </citation>
    <scope>NUCLEOTIDE SEQUENCE [MRNA]</scope>
    <source>
        <tissue>Liver</tissue>
    </source>
</reference>
<comment type="function">
    <text evidence="1 2">Has both glyceraldehyde-3-phosphate dehydrogenase and nitrosylase activities, thereby playing a role in glycolysis and nuclear functions, respectively. Glyceraldehyde-3-phosphate dehydrogenase is a key enzyme in glycolysis that catalyzes the first step of the pathway by converting D-glyceraldehyde 3-phosphate (G3P) into 3-phospho-D-glyceroyl phosphate (By similarity). Participates in nuclear events including transcription, RNA transport, DNA replication and apoptosis. Nuclear functions are probably due to the nitrosylase activity that mediates cysteine S-nitrosylation of nuclear target proteins such as SIRT1, HDAC2 and PRKDC (By similarity).</text>
</comment>
<comment type="catalytic activity">
    <reaction evidence="1 4">
        <text>D-glyceraldehyde 3-phosphate + phosphate + NAD(+) = (2R)-3-phospho-glyceroyl phosphate + NADH + H(+)</text>
        <dbReference type="Rhea" id="RHEA:10300"/>
        <dbReference type="ChEBI" id="CHEBI:15378"/>
        <dbReference type="ChEBI" id="CHEBI:43474"/>
        <dbReference type="ChEBI" id="CHEBI:57540"/>
        <dbReference type="ChEBI" id="CHEBI:57604"/>
        <dbReference type="ChEBI" id="CHEBI:57945"/>
        <dbReference type="ChEBI" id="CHEBI:59776"/>
        <dbReference type="EC" id="1.2.1.12"/>
    </reaction>
</comment>
<comment type="catalytic activity">
    <reaction evidence="2">
        <text>S-nitroso-L-cysteinyl-[GAPDH] + L-cysteinyl-[protein] = L-cysteinyl-[GAPDH] + S-nitroso-L-cysteinyl-[protein]</text>
        <dbReference type="Rhea" id="RHEA:66684"/>
        <dbReference type="Rhea" id="RHEA-COMP:10131"/>
        <dbReference type="Rhea" id="RHEA-COMP:17089"/>
        <dbReference type="Rhea" id="RHEA-COMP:17090"/>
        <dbReference type="Rhea" id="RHEA-COMP:17091"/>
        <dbReference type="ChEBI" id="CHEBI:29950"/>
        <dbReference type="ChEBI" id="CHEBI:149494"/>
    </reaction>
    <physiologicalReaction direction="left-to-right" evidence="2">
        <dbReference type="Rhea" id="RHEA:66685"/>
    </physiologicalReaction>
</comment>
<comment type="pathway">
    <text>Carbohydrate degradation; glycolysis; pyruvate from D-glyceraldehyde 3-phosphate: step 1/5.</text>
</comment>
<comment type="subunit">
    <text evidence="1">Homotetramer.</text>
</comment>
<comment type="subcellular location">
    <subcellularLocation>
        <location evidence="2">Cytoplasm</location>
        <location evidence="2">Cytosol</location>
    </subcellularLocation>
    <subcellularLocation>
        <location evidence="2">Cytoplasm</location>
        <location evidence="2">Cytoskeleton</location>
    </subcellularLocation>
    <subcellularLocation>
        <location evidence="2">Nucleus</location>
    </subcellularLocation>
</comment>
<comment type="PTM">
    <text evidence="2">S-nitrosylation of Cys-150 leads to translocation to the nucleus.</text>
</comment>
<comment type="similarity">
    <text evidence="5">Belongs to the glyceraldehyde-3-phosphate dehydrogenase family.</text>
</comment>
<feature type="chain" id="PRO_0000145497" description="Glyceraldehyde-3-phosphate dehydrogenase">
    <location>
        <begin position="1"/>
        <end position="333"/>
    </location>
</feature>
<feature type="active site" description="Nucleophile" evidence="4">
    <location>
        <position position="150"/>
    </location>
</feature>
<feature type="binding site" evidence="1">
    <location>
        <begin position="11"/>
        <end position="12"/>
    </location>
    <ligand>
        <name>NAD(+)</name>
        <dbReference type="ChEBI" id="CHEBI:57540"/>
    </ligand>
</feature>
<feature type="binding site" evidence="1">
    <location>
        <position position="33"/>
    </location>
    <ligand>
        <name>NAD(+)</name>
        <dbReference type="ChEBI" id="CHEBI:57540"/>
    </ligand>
</feature>
<feature type="binding site" evidence="1">
    <location>
        <position position="78"/>
    </location>
    <ligand>
        <name>NAD(+)</name>
        <dbReference type="ChEBI" id="CHEBI:57540"/>
    </ligand>
</feature>
<feature type="binding site" evidence="1">
    <location>
        <position position="120"/>
    </location>
    <ligand>
        <name>NAD(+)</name>
        <dbReference type="ChEBI" id="CHEBI:57540"/>
    </ligand>
</feature>
<feature type="binding site" evidence="3">
    <location>
        <begin position="149"/>
        <end position="151"/>
    </location>
    <ligand>
        <name>D-glyceraldehyde 3-phosphate</name>
        <dbReference type="ChEBI" id="CHEBI:59776"/>
    </ligand>
</feature>
<feature type="binding site" evidence="3">
    <location>
        <position position="180"/>
    </location>
    <ligand>
        <name>D-glyceraldehyde 3-phosphate</name>
        <dbReference type="ChEBI" id="CHEBI:59776"/>
    </ligand>
</feature>
<feature type="binding site" evidence="3">
    <location>
        <begin position="209"/>
        <end position="210"/>
    </location>
    <ligand>
        <name>D-glyceraldehyde 3-phosphate</name>
        <dbReference type="ChEBI" id="CHEBI:59776"/>
    </ligand>
</feature>
<feature type="binding site" evidence="3">
    <location>
        <position position="232"/>
    </location>
    <ligand>
        <name>D-glyceraldehyde 3-phosphate</name>
        <dbReference type="ChEBI" id="CHEBI:59776"/>
    </ligand>
</feature>
<feature type="binding site" evidence="1">
    <location>
        <position position="314"/>
    </location>
    <ligand>
        <name>NAD(+)</name>
        <dbReference type="ChEBI" id="CHEBI:57540"/>
    </ligand>
</feature>
<feature type="site" description="Activates thiol group during catalysis" evidence="1">
    <location>
        <position position="177"/>
    </location>
</feature>
<feature type="modified residue" description="S-nitrosocysteine" evidence="2">
    <location>
        <position position="150"/>
    </location>
</feature>
<dbReference type="EC" id="1.2.1.12" evidence="1"/>
<dbReference type="EC" id="2.6.99.-" evidence="2"/>
<dbReference type="EMBL" id="AF036934">
    <property type="protein sequence ID" value="AAB88869.1"/>
    <property type="molecule type" value="mRNA"/>
</dbReference>
<dbReference type="RefSeq" id="NP_001269764.1">
    <property type="nucleotide sequence ID" value="NM_001282835.1"/>
</dbReference>
<dbReference type="SMR" id="O57479"/>
<dbReference type="GeneID" id="102089934"/>
<dbReference type="KEGG" id="clv:102089934"/>
<dbReference type="CTD" id="2597"/>
<dbReference type="eggNOG" id="KOG0657">
    <property type="taxonomic scope" value="Eukaryota"/>
</dbReference>
<dbReference type="OrthoDB" id="94424at8782"/>
<dbReference type="UniPathway" id="UPA00109">
    <property type="reaction ID" value="UER00184"/>
</dbReference>
<dbReference type="GO" id="GO:0005737">
    <property type="term" value="C:cytoplasm"/>
    <property type="evidence" value="ECO:0000250"/>
    <property type="project" value="UniProtKB"/>
</dbReference>
<dbReference type="GO" id="GO:0005829">
    <property type="term" value="C:cytosol"/>
    <property type="evidence" value="ECO:0000250"/>
    <property type="project" value="UniProtKB"/>
</dbReference>
<dbReference type="GO" id="GO:0015630">
    <property type="term" value="C:microtubule cytoskeleton"/>
    <property type="evidence" value="ECO:0000250"/>
    <property type="project" value="UniProtKB"/>
</dbReference>
<dbReference type="GO" id="GO:0005634">
    <property type="term" value="C:nucleus"/>
    <property type="evidence" value="ECO:0000250"/>
    <property type="project" value="UniProtKB"/>
</dbReference>
<dbReference type="GO" id="GO:0004365">
    <property type="term" value="F:glyceraldehyde-3-phosphate dehydrogenase (NAD+) (phosphorylating) activity"/>
    <property type="evidence" value="ECO:0000250"/>
    <property type="project" value="UniProtKB"/>
</dbReference>
<dbReference type="GO" id="GO:0008017">
    <property type="term" value="F:microtubule binding"/>
    <property type="evidence" value="ECO:0000250"/>
    <property type="project" value="UniProtKB"/>
</dbReference>
<dbReference type="GO" id="GO:0051287">
    <property type="term" value="F:NAD binding"/>
    <property type="evidence" value="ECO:0007669"/>
    <property type="project" value="InterPro"/>
</dbReference>
<dbReference type="GO" id="GO:0050661">
    <property type="term" value="F:NADP binding"/>
    <property type="evidence" value="ECO:0007669"/>
    <property type="project" value="InterPro"/>
</dbReference>
<dbReference type="GO" id="GO:0035605">
    <property type="term" value="F:peptidyl-cysteine S-nitrosylase activity"/>
    <property type="evidence" value="ECO:0000250"/>
    <property type="project" value="UniProtKB"/>
</dbReference>
<dbReference type="GO" id="GO:0006006">
    <property type="term" value="P:glucose metabolic process"/>
    <property type="evidence" value="ECO:0007669"/>
    <property type="project" value="InterPro"/>
</dbReference>
<dbReference type="GO" id="GO:0006096">
    <property type="term" value="P:glycolytic process"/>
    <property type="evidence" value="ECO:0007669"/>
    <property type="project" value="UniProtKB-UniPathway"/>
</dbReference>
<dbReference type="GO" id="GO:0000226">
    <property type="term" value="P:microtubule cytoskeleton organization"/>
    <property type="evidence" value="ECO:0000250"/>
    <property type="project" value="UniProtKB"/>
</dbReference>
<dbReference type="GO" id="GO:0051402">
    <property type="term" value="P:neuron apoptotic process"/>
    <property type="evidence" value="ECO:0000250"/>
    <property type="project" value="UniProtKB"/>
</dbReference>
<dbReference type="GO" id="GO:0035606">
    <property type="term" value="P:peptidyl-cysteine S-trans-nitrosylation"/>
    <property type="evidence" value="ECO:0000250"/>
    <property type="project" value="UniProtKB"/>
</dbReference>
<dbReference type="GO" id="GO:0043123">
    <property type="term" value="P:positive regulation of canonical NF-kappaB signal transduction"/>
    <property type="evidence" value="ECO:0000250"/>
    <property type="project" value="UniProtKB"/>
</dbReference>
<dbReference type="GO" id="GO:0032481">
    <property type="term" value="P:positive regulation of type I interferon production"/>
    <property type="evidence" value="ECO:0000250"/>
    <property type="project" value="UniProtKB"/>
</dbReference>
<dbReference type="GO" id="GO:0050821">
    <property type="term" value="P:protein stabilization"/>
    <property type="evidence" value="ECO:0000250"/>
    <property type="project" value="UniProtKB"/>
</dbReference>
<dbReference type="CDD" id="cd18126">
    <property type="entry name" value="GAPDH_I_C"/>
    <property type="match status" value="1"/>
</dbReference>
<dbReference type="CDD" id="cd05214">
    <property type="entry name" value="GAPDH_I_N"/>
    <property type="match status" value="1"/>
</dbReference>
<dbReference type="FunFam" id="3.30.360.10:FF:000001">
    <property type="entry name" value="Glyceraldehyde-3-phosphate dehydrogenase"/>
    <property type="match status" value="1"/>
</dbReference>
<dbReference type="FunFam" id="3.40.50.720:FF:001161">
    <property type="entry name" value="Glyceraldehyde-3-phosphate dehydrogenase"/>
    <property type="match status" value="1"/>
</dbReference>
<dbReference type="FunFam" id="3.40.50.720:FF:000636">
    <property type="entry name" value="Glyceraldehyde-3-phosphate dehydrogenase 2, cytosolic"/>
    <property type="match status" value="1"/>
</dbReference>
<dbReference type="Gene3D" id="3.30.360.10">
    <property type="entry name" value="Dihydrodipicolinate Reductase, domain 2"/>
    <property type="match status" value="1"/>
</dbReference>
<dbReference type="Gene3D" id="3.40.50.720">
    <property type="entry name" value="NAD(P)-binding Rossmann-like Domain"/>
    <property type="match status" value="1"/>
</dbReference>
<dbReference type="InterPro" id="IPR020831">
    <property type="entry name" value="GlycerAld/Erythrose_P_DH"/>
</dbReference>
<dbReference type="InterPro" id="IPR020830">
    <property type="entry name" value="GlycerAld_3-P_DH_AS"/>
</dbReference>
<dbReference type="InterPro" id="IPR020829">
    <property type="entry name" value="GlycerAld_3-P_DH_cat"/>
</dbReference>
<dbReference type="InterPro" id="IPR020828">
    <property type="entry name" value="GlycerAld_3-P_DH_NAD(P)-bd"/>
</dbReference>
<dbReference type="InterPro" id="IPR006424">
    <property type="entry name" value="Glyceraldehyde-3-P_DH_1"/>
</dbReference>
<dbReference type="InterPro" id="IPR036291">
    <property type="entry name" value="NAD(P)-bd_dom_sf"/>
</dbReference>
<dbReference type="NCBIfam" id="TIGR01534">
    <property type="entry name" value="GAPDH-I"/>
    <property type="match status" value="1"/>
</dbReference>
<dbReference type="PANTHER" id="PTHR10836">
    <property type="entry name" value="GLYCERALDEHYDE 3-PHOSPHATE DEHYDROGENASE"/>
    <property type="match status" value="1"/>
</dbReference>
<dbReference type="PANTHER" id="PTHR10836:SF111">
    <property type="entry name" value="GLYCERALDEHYDE-3-PHOSPHATE DEHYDROGENASE"/>
    <property type="match status" value="1"/>
</dbReference>
<dbReference type="Pfam" id="PF02800">
    <property type="entry name" value="Gp_dh_C"/>
    <property type="match status" value="1"/>
</dbReference>
<dbReference type="Pfam" id="PF00044">
    <property type="entry name" value="Gp_dh_N"/>
    <property type="match status" value="1"/>
</dbReference>
<dbReference type="PIRSF" id="PIRSF000149">
    <property type="entry name" value="GAP_DH"/>
    <property type="match status" value="1"/>
</dbReference>
<dbReference type="PRINTS" id="PR00078">
    <property type="entry name" value="G3PDHDRGNASE"/>
</dbReference>
<dbReference type="SMART" id="SM00846">
    <property type="entry name" value="Gp_dh_N"/>
    <property type="match status" value="1"/>
</dbReference>
<dbReference type="SUPFAM" id="SSF55347">
    <property type="entry name" value="Glyceraldehyde-3-phosphate dehydrogenase-like, C-terminal domain"/>
    <property type="match status" value="1"/>
</dbReference>
<dbReference type="SUPFAM" id="SSF51735">
    <property type="entry name" value="NAD(P)-binding Rossmann-fold domains"/>
    <property type="match status" value="1"/>
</dbReference>
<dbReference type="PROSITE" id="PS00071">
    <property type="entry name" value="GAPDH"/>
    <property type="match status" value="1"/>
</dbReference>
<accession>O57479</accession>
<keyword id="KW-0053">Apoptosis</keyword>
<keyword id="KW-0963">Cytoplasm</keyword>
<keyword id="KW-0206">Cytoskeleton</keyword>
<keyword id="KW-0324">Glycolysis</keyword>
<keyword id="KW-0520">NAD</keyword>
<keyword id="KW-0539">Nucleus</keyword>
<keyword id="KW-0560">Oxidoreductase</keyword>
<keyword id="KW-0702">S-nitrosylation</keyword>
<keyword id="KW-0808">Transferase</keyword>
<name>G3P_COLLI</name>
<organism>
    <name type="scientific">Columba livia</name>
    <name type="common">Rock dove</name>
    <dbReference type="NCBI Taxonomy" id="8932"/>
    <lineage>
        <taxon>Eukaryota</taxon>
        <taxon>Metazoa</taxon>
        <taxon>Chordata</taxon>
        <taxon>Craniata</taxon>
        <taxon>Vertebrata</taxon>
        <taxon>Euteleostomi</taxon>
        <taxon>Archelosauria</taxon>
        <taxon>Archosauria</taxon>
        <taxon>Dinosauria</taxon>
        <taxon>Saurischia</taxon>
        <taxon>Theropoda</taxon>
        <taxon>Coelurosauria</taxon>
        <taxon>Aves</taxon>
        <taxon>Neognathae</taxon>
        <taxon>Neoaves</taxon>
        <taxon>Columbimorphae</taxon>
        <taxon>Columbiformes</taxon>
        <taxon>Columbidae</taxon>
        <taxon>Columba</taxon>
    </lineage>
</organism>
<sequence length="333" mass="35767">MVKVGVNGFGRIGRLVTRAAILSAKVQVVAINDPFIDLNYMVYMFKYDSTHGHFRGTVKAENGKLVINGNAITIFQERDPSNIKWADAGAEYVVESTGVFTTMEKAGAHLKGGAKRVIISAPSADAPMFVMGVNHEKYDKSLKIVSNASCTTNCLAPLAKVIHDNFGIVEGLMTTVHAITATQKTVDGPSGKLWRDGRGAAQNIIPASTGAAKAVGKVIPELNGKLTGMAFRVPTPNVSVVDLTCRLEKPAKYDDIKRVVKAAADGPLKGILAYTEDQVVSCDFNGDSHSSTFDAGAGIALNDHFVKLVSWYDNEYGYSNRVVDLMVHMASKE</sequence>